<gene>
    <name type="primary">Znf521</name>
    <name type="synonym">Evi3</name>
    <name type="synonym">Zfp521</name>
</gene>
<name>ZN521_MOUSE</name>
<evidence type="ECO:0000250" key="1"/>
<evidence type="ECO:0000250" key="2">
    <source>
        <dbReference type="UniProtKB" id="Q96K83"/>
    </source>
</evidence>
<evidence type="ECO:0000255" key="3">
    <source>
        <dbReference type="PROSITE-ProRule" id="PRU00042"/>
    </source>
</evidence>
<evidence type="ECO:0000256" key="4">
    <source>
        <dbReference type="SAM" id="MobiDB-lite"/>
    </source>
</evidence>
<evidence type="ECO:0000269" key="5">
    <source>
    </source>
</evidence>
<evidence type="ECO:0000269" key="6">
    <source>
    </source>
</evidence>
<evidence type="ECO:0000303" key="7">
    <source>
    </source>
</evidence>
<evidence type="ECO:0000305" key="8"/>
<evidence type="ECO:0007744" key="9">
    <source>
    </source>
</evidence>
<proteinExistence type="evidence at protein level"/>
<organism>
    <name type="scientific">Mus musculus</name>
    <name type="common">Mouse</name>
    <dbReference type="NCBI Taxonomy" id="10090"/>
    <lineage>
        <taxon>Eukaryota</taxon>
        <taxon>Metazoa</taxon>
        <taxon>Chordata</taxon>
        <taxon>Craniata</taxon>
        <taxon>Vertebrata</taxon>
        <taxon>Euteleostomi</taxon>
        <taxon>Mammalia</taxon>
        <taxon>Eutheria</taxon>
        <taxon>Euarchontoglires</taxon>
        <taxon>Glires</taxon>
        <taxon>Rodentia</taxon>
        <taxon>Myomorpha</taxon>
        <taxon>Muroidea</taxon>
        <taxon>Muridae</taxon>
        <taxon>Murinae</taxon>
        <taxon>Mus</taxon>
        <taxon>Mus</taxon>
    </lineage>
</organism>
<feature type="chain" id="PRO_0000306872" description="Zinc finger protein 521">
    <location>
        <begin position="1"/>
        <end position="1311"/>
    </location>
</feature>
<feature type="zinc finger region" description="C2H2-type 1; degenerate" evidence="3">
    <location>
        <begin position="47"/>
        <end position="67"/>
    </location>
</feature>
<feature type="zinc finger region" description="C2H2-type 2" evidence="3">
    <location>
        <begin position="118"/>
        <end position="140"/>
    </location>
</feature>
<feature type="zinc finger region" description="C2H2-type 3" evidence="3">
    <location>
        <begin position="146"/>
        <end position="168"/>
    </location>
</feature>
<feature type="zinc finger region" description="C2H2-type 4" evidence="3">
    <location>
        <begin position="174"/>
        <end position="196"/>
    </location>
</feature>
<feature type="zinc finger region" description="C2H2-type 5" evidence="3">
    <location>
        <begin position="202"/>
        <end position="224"/>
    </location>
</feature>
<feature type="zinc finger region" description="C2H2-type 6" evidence="3">
    <location>
        <begin position="246"/>
        <end position="269"/>
    </location>
</feature>
<feature type="zinc finger region" description="C2H2-type 7" evidence="3">
    <location>
        <begin position="281"/>
        <end position="304"/>
    </location>
</feature>
<feature type="zinc finger region" description="C2H2-type 8" evidence="3">
    <location>
        <begin position="310"/>
        <end position="332"/>
    </location>
</feature>
<feature type="zinc finger region" description="C2H2-type 9; degenerate" evidence="3">
    <location>
        <begin position="405"/>
        <end position="429"/>
    </location>
</feature>
<feature type="zinc finger region" description="C2H2-type 10" evidence="3">
    <location>
        <begin position="437"/>
        <end position="460"/>
    </location>
</feature>
<feature type="zinc finger region" description="C2H2-type 11" evidence="3">
    <location>
        <begin position="477"/>
        <end position="500"/>
    </location>
</feature>
<feature type="zinc finger region" description="C2H2-type 12" evidence="3">
    <location>
        <begin position="513"/>
        <end position="536"/>
    </location>
</feature>
<feature type="zinc finger region" description="C2H2-type 13; atypical" evidence="3">
    <location>
        <begin position="560"/>
        <end position="585"/>
    </location>
</feature>
<feature type="zinc finger region" description="C2H2-type 14" evidence="3">
    <location>
        <begin position="634"/>
        <end position="656"/>
    </location>
</feature>
<feature type="zinc finger region" description="C2H2-type 15" evidence="3">
    <location>
        <begin position="664"/>
        <end position="686"/>
    </location>
</feature>
<feature type="zinc finger region" description="C2H2-type 16" evidence="3">
    <location>
        <begin position="694"/>
        <end position="717"/>
    </location>
</feature>
<feature type="zinc finger region" description="C2H2-type 17" evidence="3">
    <location>
        <begin position="722"/>
        <end position="745"/>
    </location>
</feature>
<feature type="zinc finger region" description="C2H2-type 18" evidence="3">
    <location>
        <begin position="752"/>
        <end position="775"/>
    </location>
</feature>
<feature type="zinc finger region" description="C2H2-type 19" evidence="3">
    <location>
        <begin position="783"/>
        <end position="805"/>
    </location>
</feature>
<feature type="zinc finger region" description="C2H2-type 20" evidence="3">
    <location>
        <begin position="809"/>
        <end position="832"/>
    </location>
</feature>
<feature type="zinc finger region" description="C2H2-type 21; degenerate" evidence="3">
    <location>
        <begin position="886"/>
        <end position="908"/>
    </location>
</feature>
<feature type="zinc finger region" description="C2H2-type 22" evidence="3">
    <location>
        <begin position="930"/>
        <end position="952"/>
    </location>
</feature>
<feature type="zinc finger region" description="C2H2-type 23" evidence="3">
    <location>
        <begin position="959"/>
        <end position="981"/>
    </location>
</feature>
<feature type="zinc finger region" description="C2H2-type 24" evidence="3">
    <location>
        <begin position="1020"/>
        <end position="1042"/>
    </location>
</feature>
<feature type="zinc finger region" description="C2H2-type 25; degenerate" evidence="3">
    <location>
        <begin position="1065"/>
        <end position="1083"/>
    </location>
</feature>
<feature type="zinc finger region" description="C2H2-type 26" evidence="3">
    <location>
        <begin position="1138"/>
        <end position="1161"/>
    </location>
</feature>
<feature type="zinc finger region" description="C2H2-type 27" evidence="3">
    <location>
        <begin position="1195"/>
        <end position="1217"/>
    </location>
</feature>
<feature type="zinc finger region" description="C2H2-type 28" evidence="3">
    <location>
        <begin position="1225"/>
        <end position="1247"/>
    </location>
</feature>
<feature type="zinc finger region" description="C2H2-type 29" evidence="3">
    <location>
        <begin position="1256"/>
        <end position="1279"/>
    </location>
</feature>
<feature type="zinc finger region" description="C2H2-type 30" evidence="3">
    <location>
        <begin position="1286"/>
        <end position="1309"/>
    </location>
</feature>
<feature type="region of interest" description="Disordered" evidence="4">
    <location>
        <begin position="81"/>
        <end position="108"/>
    </location>
</feature>
<feature type="region of interest" description="Disordered" evidence="4">
    <location>
        <begin position="357"/>
        <end position="398"/>
    </location>
</feature>
<feature type="region of interest" description="Disordered" evidence="4">
    <location>
        <begin position="863"/>
        <end position="883"/>
    </location>
</feature>
<feature type="region of interest" description="Disordered" evidence="4">
    <location>
        <begin position="1105"/>
        <end position="1136"/>
    </location>
</feature>
<feature type="compositionally biased region" description="Low complexity" evidence="4">
    <location>
        <begin position="83"/>
        <end position="102"/>
    </location>
</feature>
<feature type="compositionally biased region" description="Polar residues" evidence="4">
    <location>
        <begin position="359"/>
        <end position="370"/>
    </location>
</feature>
<feature type="compositionally biased region" description="Polar residues" evidence="4">
    <location>
        <begin position="387"/>
        <end position="398"/>
    </location>
</feature>
<feature type="compositionally biased region" description="Low complexity" evidence="4">
    <location>
        <begin position="1105"/>
        <end position="1119"/>
    </location>
</feature>
<feature type="modified residue" description="Phosphoserine" evidence="2">
    <location>
        <position position="546"/>
    </location>
</feature>
<feature type="modified residue" description="Phosphoserine" evidence="9">
    <location>
        <position position="605"/>
    </location>
</feature>
<feature type="modified residue" description="Phosphoserine" evidence="9">
    <location>
        <position position="608"/>
    </location>
</feature>
<feature type="cross-link" description="Glycyl lysine isopeptide (Lys-Gly) (interchain with G-Cter in SUMO2)" evidence="2">
    <location>
        <position position="1146"/>
    </location>
</feature>
<feature type="splice variant" id="VSP_028553" description="In isoform 2." evidence="7">
    <original>EK</original>
    <variation>G</variation>
    <location>
        <begin position="1191"/>
        <end position="1192"/>
    </location>
</feature>
<feature type="sequence conflict" description="In Ref. 1; AAN39839." evidence="8" ref="1">
    <original>I</original>
    <variation>T</variation>
    <location>
        <position position="595"/>
    </location>
</feature>
<feature type="sequence conflict" description="In Ref. 4; BAC38132." evidence="8" ref="4">
    <original>V</original>
    <variation>L</variation>
    <location>
        <position position="771"/>
    </location>
</feature>
<feature type="sequence conflict" description="In Ref. 1; AAN39839." evidence="8" ref="1">
    <original>M</original>
    <variation>T</variation>
    <location>
        <position position="897"/>
    </location>
</feature>
<keyword id="KW-0010">Activator</keyword>
<keyword id="KW-0025">Alternative splicing</keyword>
<keyword id="KW-0217">Developmental protein</keyword>
<keyword id="KW-0221">Differentiation</keyword>
<keyword id="KW-0238">DNA-binding</keyword>
<keyword id="KW-1017">Isopeptide bond</keyword>
<keyword id="KW-0479">Metal-binding</keyword>
<keyword id="KW-0539">Nucleus</keyword>
<keyword id="KW-0597">Phosphoprotein</keyword>
<keyword id="KW-0656">Proto-oncogene</keyword>
<keyword id="KW-1185">Reference proteome</keyword>
<keyword id="KW-0677">Repeat</keyword>
<keyword id="KW-0678">Repressor</keyword>
<keyword id="KW-0804">Transcription</keyword>
<keyword id="KW-0805">Transcription regulation</keyword>
<keyword id="KW-0832">Ubl conjugation</keyword>
<keyword id="KW-0862">Zinc</keyword>
<keyword id="KW-0863">Zinc-finger</keyword>
<sequence>MSRRKQAKPRSLKDPNCKLEDKIEDGEAVDCKKRPEDGEELEEDAVHSCDSCLQVFESLSDITEHKIHQCQLTDGVDVEDDPSCSWPASSPSSKDQTSPSHGEGCDFGEEEGGPGLPYPCQFCDKSFSRLSYLKHHEQSHSDKLPFKCTYCSRLFKHKRSRDRHIKLHTGDKKYHCSECDAAFSRSDHLKIHLKTHTSNKPYKCAVCRRGFLSSSSLHGHMQVHERNKDGSQSGSRMEDWKMKDTQKCSQCEEGFDFPEDLQKHIAECHPECSPNEDRAALQCMYCHELFVEETSLMNHIEQVHGGEKKNSCSICSESFLTVEELYSHMDSHQQPESCNHSNSPSLVTVGYTSVSSTTPDSNLSVDSSTMVEAAPPIPKSRGRKRAAQQTSDMTGPSSKQAKVTYSCIYCNKQLFSSLAVLQIHLKTMHLDKPEQAHICQYCLEVLPSLYNLNEHLKQVHEAQDPGLIVSAMPAIVYQCNFCSEVVNDLNTLQEHIRCSHGFANPAAKDSNAFFCPHCYMGFLTDSSLEEHIRQVHCDLSGSRFGSPVLGTPKEPVVEVYSCSYCTNSPIFNSVLKLNKHIKENHKNIPLALNYIHNGKKSRALSPLSPVAIEQTTLKMMQTVGGGPARASGEYICNQCGAKYTSLDSFQTHLKTHLDTVLPKLTCPQCNKEFPNQESLLKHVTIHFMITSTYYICESCDKQFTSVDDLQKHLLDMHTFVFFRCTLCQEVFDSKVSIQLHLAVKHSNEKKVYRCTSCNWDFRNETDLQLHVKHNHLENQGKVHKCIFCGESFGTEVELQCHITTHSKKYNCRFCSKAFHAVILLEKHLREKHCVFETKTPNCGTNGASEQVQKEEAELQTLLTNSQESHNSHDGSEEDVDSSEPMYGCDICGAAYTMETLLQNHQLRDHNIRPGESAIVKKKAELIKGNYKCNVCSRTFFSENGLREHMQTHLGPVKHYMCPICGERFPSLLTLTEHKVTHSKSLDTGNCRICKMPLQSEEEFLEHCQMHPDLRNSLTGFRCVVCMQTVTSTLELKIHGTFHMQKTGNGSSVQTTGRGQHVQKLYKCASCLKEFRSKQDLVKLDINGLPYGLCAGCVNLSKSSSPGLSLPPGASRPGLGQNESLSAMEGKGKAGGLKTRCSSCNVKFESESELQNHIQTVHRELVPDANSTQLKTPQVSPMPRISPSQSDEKKTYQCIKCQMVFYNEWDIQVHVANHMIDEGLNHECKLCSQTFDSPAKLQCHLIEHSFEGMGGTFKCPVCFTVFVQANKLQQHIFSAHGQEDKIYDCTQCPQKFFFQTELQNHTMTQHSS</sequence>
<reference key="1">
    <citation type="journal article" date="2003" name="Blood">
        <title>Evi3, a common retroviral integration site in murine B-cell lymphoma, encodes an EBFAZ-related Kruppel-like zinc finger protein.</title>
        <authorList>
            <person name="Warming S."/>
            <person name="Liu P."/>
            <person name="Suzuki T."/>
            <person name="Akagi K."/>
            <person name="Lindtner S."/>
            <person name="Pavlakis G.N."/>
            <person name="Jenkins N.A."/>
            <person name="Copeland N.G."/>
        </authorList>
    </citation>
    <scope>NUCLEOTIDE SEQUENCE [MRNA] (ISOFORM 1)</scope>
    <scope>SUBCELLULAR LOCATION</scope>
    <scope>INVOLVEMENT IN B-CELL LEUKEMIA</scope>
    <scope>TISSUE SPECIFICITY</scope>
    <source>
        <strain>BALB/cJ</strain>
    </source>
</reference>
<reference key="2">
    <citation type="journal article" date="2004" name="DNA Res.">
        <title>Prediction of the coding sequences of mouse homologues of FLJ genes: the complete nucleotide sequences of 110 mouse FLJ-homologous cDNAs identified by screening of terminal sequences of cDNA clones randomly sampled from size-fractionated libraries.</title>
        <authorList>
            <person name="Okazaki N."/>
            <person name="Kikuno R."/>
            <person name="Ohara R."/>
            <person name="Inamoto S."/>
            <person name="Koseki H."/>
            <person name="Hiraoka S."/>
            <person name="Saga Y."/>
            <person name="Kitamura H."/>
            <person name="Nakagawa T."/>
            <person name="Nagase T."/>
            <person name="Ohara O."/>
            <person name="Koga H."/>
        </authorList>
    </citation>
    <scope>NUCLEOTIDE SEQUENCE [LARGE SCALE MRNA] (ISOFORM 1)</scope>
    <source>
        <tissue>Fetal brain</tissue>
    </source>
</reference>
<reference key="3">
    <citation type="journal article" date="2004" name="Genome Res.">
        <title>The status, quality, and expansion of the NIH full-length cDNA project: the Mammalian Gene Collection (MGC).</title>
        <authorList>
            <consortium name="The MGC Project Team"/>
        </authorList>
    </citation>
    <scope>NUCLEOTIDE SEQUENCE [LARGE SCALE MRNA] (ISOFORM 1)</scope>
    <source>
        <strain>Czech II</strain>
        <tissue>Mammary tumor</tissue>
    </source>
</reference>
<reference key="4">
    <citation type="journal article" date="2005" name="Science">
        <title>The transcriptional landscape of the mammalian genome.</title>
        <authorList>
            <person name="Carninci P."/>
            <person name="Kasukawa T."/>
            <person name="Katayama S."/>
            <person name="Gough J."/>
            <person name="Frith M.C."/>
            <person name="Maeda N."/>
            <person name="Oyama R."/>
            <person name="Ravasi T."/>
            <person name="Lenhard B."/>
            <person name="Wells C."/>
            <person name="Kodzius R."/>
            <person name="Shimokawa K."/>
            <person name="Bajic V.B."/>
            <person name="Brenner S.E."/>
            <person name="Batalov S."/>
            <person name="Forrest A.R."/>
            <person name="Zavolan M."/>
            <person name="Davis M.J."/>
            <person name="Wilming L.G."/>
            <person name="Aidinis V."/>
            <person name="Allen J.E."/>
            <person name="Ambesi-Impiombato A."/>
            <person name="Apweiler R."/>
            <person name="Aturaliya R.N."/>
            <person name="Bailey T.L."/>
            <person name="Bansal M."/>
            <person name="Baxter L."/>
            <person name="Beisel K.W."/>
            <person name="Bersano T."/>
            <person name="Bono H."/>
            <person name="Chalk A.M."/>
            <person name="Chiu K.P."/>
            <person name="Choudhary V."/>
            <person name="Christoffels A."/>
            <person name="Clutterbuck D.R."/>
            <person name="Crowe M.L."/>
            <person name="Dalla E."/>
            <person name="Dalrymple B.P."/>
            <person name="de Bono B."/>
            <person name="Della Gatta G."/>
            <person name="di Bernardo D."/>
            <person name="Down T."/>
            <person name="Engstrom P."/>
            <person name="Fagiolini M."/>
            <person name="Faulkner G."/>
            <person name="Fletcher C.F."/>
            <person name="Fukushima T."/>
            <person name="Furuno M."/>
            <person name="Futaki S."/>
            <person name="Gariboldi M."/>
            <person name="Georgii-Hemming P."/>
            <person name="Gingeras T.R."/>
            <person name="Gojobori T."/>
            <person name="Green R.E."/>
            <person name="Gustincich S."/>
            <person name="Harbers M."/>
            <person name="Hayashi Y."/>
            <person name="Hensch T.K."/>
            <person name="Hirokawa N."/>
            <person name="Hill D."/>
            <person name="Huminiecki L."/>
            <person name="Iacono M."/>
            <person name="Ikeo K."/>
            <person name="Iwama A."/>
            <person name="Ishikawa T."/>
            <person name="Jakt M."/>
            <person name="Kanapin A."/>
            <person name="Katoh M."/>
            <person name="Kawasawa Y."/>
            <person name="Kelso J."/>
            <person name="Kitamura H."/>
            <person name="Kitano H."/>
            <person name="Kollias G."/>
            <person name="Krishnan S.P."/>
            <person name="Kruger A."/>
            <person name="Kummerfeld S.K."/>
            <person name="Kurochkin I.V."/>
            <person name="Lareau L.F."/>
            <person name="Lazarevic D."/>
            <person name="Lipovich L."/>
            <person name="Liu J."/>
            <person name="Liuni S."/>
            <person name="McWilliam S."/>
            <person name="Madan Babu M."/>
            <person name="Madera M."/>
            <person name="Marchionni L."/>
            <person name="Matsuda H."/>
            <person name="Matsuzawa S."/>
            <person name="Miki H."/>
            <person name="Mignone F."/>
            <person name="Miyake S."/>
            <person name="Morris K."/>
            <person name="Mottagui-Tabar S."/>
            <person name="Mulder N."/>
            <person name="Nakano N."/>
            <person name="Nakauchi H."/>
            <person name="Ng P."/>
            <person name="Nilsson R."/>
            <person name="Nishiguchi S."/>
            <person name="Nishikawa S."/>
            <person name="Nori F."/>
            <person name="Ohara O."/>
            <person name="Okazaki Y."/>
            <person name="Orlando V."/>
            <person name="Pang K.C."/>
            <person name="Pavan W.J."/>
            <person name="Pavesi G."/>
            <person name="Pesole G."/>
            <person name="Petrovsky N."/>
            <person name="Piazza S."/>
            <person name="Reed J."/>
            <person name="Reid J.F."/>
            <person name="Ring B.Z."/>
            <person name="Ringwald M."/>
            <person name="Rost B."/>
            <person name="Ruan Y."/>
            <person name="Salzberg S.L."/>
            <person name="Sandelin A."/>
            <person name="Schneider C."/>
            <person name="Schoenbach C."/>
            <person name="Sekiguchi K."/>
            <person name="Semple C.A."/>
            <person name="Seno S."/>
            <person name="Sessa L."/>
            <person name="Sheng Y."/>
            <person name="Shibata Y."/>
            <person name="Shimada H."/>
            <person name="Shimada K."/>
            <person name="Silva D."/>
            <person name="Sinclair B."/>
            <person name="Sperling S."/>
            <person name="Stupka E."/>
            <person name="Sugiura K."/>
            <person name="Sultana R."/>
            <person name="Takenaka Y."/>
            <person name="Taki K."/>
            <person name="Tammoja K."/>
            <person name="Tan S.L."/>
            <person name="Tang S."/>
            <person name="Taylor M.S."/>
            <person name="Tegner J."/>
            <person name="Teichmann S.A."/>
            <person name="Ueda H.R."/>
            <person name="van Nimwegen E."/>
            <person name="Verardo R."/>
            <person name="Wei C.L."/>
            <person name="Yagi K."/>
            <person name="Yamanishi H."/>
            <person name="Zabarovsky E."/>
            <person name="Zhu S."/>
            <person name="Zimmer A."/>
            <person name="Hide W."/>
            <person name="Bult C."/>
            <person name="Grimmond S.M."/>
            <person name="Teasdale R.D."/>
            <person name="Liu E.T."/>
            <person name="Brusic V."/>
            <person name="Quackenbush J."/>
            <person name="Wahlestedt C."/>
            <person name="Mattick J.S."/>
            <person name="Hume D.A."/>
            <person name="Kai C."/>
            <person name="Sasaki D."/>
            <person name="Tomaru Y."/>
            <person name="Fukuda S."/>
            <person name="Kanamori-Katayama M."/>
            <person name="Suzuki M."/>
            <person name="Aoki J."/>
            <person name="Arakawa T."/>
            <person name="Iida J."/>
            <person name="Imamura K."/>
            <person name="Itoh M."/>
            <person name="Kato T."/>
            <person name="Kawaji H."/>
            <person name="Kawagashira N."/>
            <person name="Kawashima T."/>
            <person name="Kojima M."/>
            <person name="Kondo S."/>
            <person name="Konno H."/>
            <person name="Nakano K."/>
            <person name="Ninomiya N."/>
            <person name="Nishio T."/>
            <person name="Okada M."/>
            <person name="Plessy C."/>
            <person name="Shibata K."/>
            <person name="Shiraki T."/>
            <person name="Suzuki S."/>
            <person name="Tagami M."/>
            <person name="Waki K."/>
            <person name="Watahiki A."/>
            <person name="Okamura-Oho Y."/>
            <person name="Suzuki H."/>
            <person name="Kawai J."/>
            <person name="Hayashizaki Y."/>
        </authorList>
    </citation>
    <scope>NUCLEOTIDE SEQUENCE [LARGE SCALE MRNA] OF 771-1311 (ISOFORM 2)</scope>
    <scope>NUCLEOTIDE SEQUENCE [LARGE SCALE MRNA] OF 983-1311 (ISOFORM 1)</scope>
    <source>
        <strain>C57BL/6J</strain>
        <tissue>Cerebellum</tissue>
    </source>
</reference>
<reference key="5">
    <citation type="journal article" date="2005" name="Oncogene">
        <title>Evi3, a zinc-finger protein related to EBFAZ, regulates EBF activity in B-cell leukemia.</title>
        <authorList>
            <person name="Hentges K.E."/>
            <person name="Weiser K.C."/>
            <person name="Schountz T."/>
            <person name="Woodward L.S."/>
            <person name="Morse H.C."/>
            <person name="Justice M.J."/>
        </authorList>
    </citation>
    <scope>INVOLVEMENT IN B-CELL LEUKEMIA</scope>
</reference>
<reference key="6">
    <citation type="journal article" date="2010" name="Cell">
        <title>A tissue-specific atlas of mouse protein phosphorylation and expression.</title>
        <authorList>
            <person name="Huttlin E.L."/>
            <person name="Jedrychowski M.P."/>
            <person name="Elias J.E."/>
            <person name="Goswami T."/>
            <person name="Rad R."/>
            <person name="Beausoleil S.A."/>
            <person name="Villen J."/>
            <person name="Haas W."/>
            <person name="Sowa M.E."/>
            <person name="Gygi S.P."/>
        </authorList>
    </citation>
    <scope>PHOSPHORYLATION [LARGE SCALE ANALYSIS] AT SER-605 AND SER-608</scope>
    <scope>IDENTIFICATION BY MASS SPECTROMETRY [LARGE SCALE ANALYSIS]</scope>
    <source>
        <tissue>Brain</tissue>
        <tissue>Brown adipose tissue</tissue>
        <tissue>Heart</tissue>
        <tissue>Kidney</tissue>
    </source>
</reference>
<accession>Q6KAS7</accession>
<accession>Q8BIF5</accession>
<accession>Q8BV21</accession>
<accession>Q8CIQ2</accession>
<accession>Q8VDS6</accession>
<protein>
    <recommendedName>
        <fullName>Zinc finger protein 521</fullName>
    </recommendedName>
    <alternativeName>
        <fullName>Ecotropic viral integration site 3 protein</fullName>
    </alternativeName>
</protein>
<dbReference type="EMBL" id="AY147406">
    <property type="protein sequence ID" value="AAN39839.1"/>
    <property type="molecule type" value="mRNA"/>
</dbReference>
<dbReference type="EMBL" id="AK131130">
    <property type="protein sequence ID" value="BAD21380.1"/>
    <property type="status" value="ALT_INIT"/>
    <property type="molecule type" value="mRNA"/>
</dbReference>
<dbReference type="EMBL" id="BC021376">
    <property type="protein sequence ID" value="AAH21376.1"/>
    <property type="molecule type" value="mRNA"/>
</dbReference>
<dbReference type="EMBL" id="AK077697">
    <property type="protein sequence ID" value="BAC36964.1"/>
    <property type="status" value="ALT_INIT"/>
    <property type="molecule type" value="mRNA"/>
</dbReference>
<dbReference type="EMBL" id="AK081096">
    <property type="protein sequence ID" value="BAC38132.1"/>
    <property type="molecule type" value="mRNA"/>
</dbReference>
<dbReference type="CCDS" id="CCDS37740.1">
    <molecule id="Q6KAS7-1"/>
</dbReference>
<dbReference type="RefSeq" id="NP_663467.1">
    <molecule id="Q6KAS7-1"/>
    <property type="nucleotide sequence ID" value="NM_145492.4"/>
</dbReference>
<dbReference type="BioGRID" id="230369">
    <property type="interactions" value="5"/>
</dbReference>
<dbReference type="FunCoup" id="Q6KAS7">
    <property type="interactions" value="2499"/>
</dbReference>
<dbReference type="IntAct" id="Q6KAS7">
    <property type="interactions" value="1"/>
</dbReference>
<dbReference type="STRING" id="10090.ENSMUSP00000025288"/>
<dbReference type="GlyConnect" id="2829">
    <property type="glycosylation" value="5 N-Linked glycans (3 sites)"/>
</dbReference>
<dbReference type="GlyCosmos" id="Q6KAS7">
    <property type="glycosylation" value="3 sites, 5 glycans"/>
</dbReference>
<dbReference type="GlyGen" id="Q6KAS7">
    <property type="glycosylation" value="3 sites, 5 N-linked glycans (3 sites)"/>
</dbReference>
<dbReference type="iPTMnet" id="Q6KAS7"/>
<dbReference type="PhosphoSitePlus" id="Q6KAS7"/>
<dbReference type="PaxDb" id="10090-ENSMUSP00000025288"/>
<dbReference type="PeptideAtlas" id="Q6KAS7"/>
<dbReference type="ProteomicsDB" id="302085">
    <molecule id="Q6KAS7-1"/>
</dbReference>
<dbReference type="ProteomicsDB" id="302086">
    <molecule id="Q6KAS7-2"/>
</dbReference>
<dbReference type="Antibodypedia" id="7815">
    <property type="antibodies" value="197 antibodies from 24 providers"/>
</dbReference>
<dbReference type="DNASU" id="225207"/>
<dbReference type="Ensembl" id="ENSMUST00000025288.9">
    <molecule id="Q6KAS7-1"/>
    <property type="protein sequence ID" value="ENSMUSP00000025288.8"/>
    <property type="gene ID" value="ENSMUSG00000024420.10"/>
</dbReference>
<dbReference type="Ensembl" id="ENSMUST00000234410.2">
    <molecule id="Q6KAS7-1"/>
    <property type="protein sequence ID" value="ENSMUSP00000157321.2"/>
    <property type="gene ID" value="ENSMUSG00000024420.10"/>
</dbReference>
<dbReference type="GeneID" id="225207"/>
<dbReference type="KEGG" id="mmu:225207"/>
<dbReference type="UCSC" id="uc008edc.1">
    <molecule id="Q6KAS7-1"/>
    <property type="organism name" value="mouse"/>
</dbReference>
<dbReference type="AGR" id="MGI:95459"/>
<dbReference type="CTD" id="225207"/>
<dbReference type="MGI" id="MGI:95459">
    <property type="gene designation" value="Zfp521"/>
</dbReference>
<dbReference type="VEuPathDB" id="HostDB:ENSMUSG00000024420"/>
<dbReference type="eggNOG" id="KOG1721">
    <property type="taxonomic scope" value="Eukaryota"/>
</dbReference>
<dbReference type="GeneTree" id="ENSGT00940000159287"/>
<dbReference type="HOGENOM" id="CLU_004018_0_0_1"/>
<dbReference type="InParanoid" id="Q6KAS7"/>
<dbReference type="OMA" id="CDRTFPR"/>
<dbReference type="OrthoDB" id="10014897at2759"/>
<dbReference type="PhylomeDB" id="Q6KAS7"/>
<dbReference type="TreeFam" id="TF331504"/>
<dbReference type="BioGRID-ORCS" id="225207">
    <property type="hits" value="6 hits in 81 CRISPR screens"/>
</dbReference>
<dbReference type="ChiTaRS" id="Zfp521">
    <property type="organism name" value="mouse"/>
</dbReference>
<dbReference type="PRO" id="PR:Q6KAS7"/>
<dbReference type="Proteomes" id="UP000000589">
    <property type="component" value="Chromosome 18"/>
</dbReference>
<dbReference type="RNAct" id="Q6KAS7">
    <property type="molecule type" value="protein"/>
</dbReference>
<dbReference type="Bgee" id="ENSMUSG00000024420">
    <property type="expression patterns" value="Expressed in secondary palatal shelf and 233 other cell types or tissues"/>
</dbReference>
<dbReference type="ExpressionAtlas" id="Q6KAS7">
    <property type="expression patterns" value="baseline and differential"/>
</dbReference>
<dbReference type="GO" id="GO:0005654">
    <property type="term" value="C:nucleoplasm"/>
    <property type="evidence" value="ECO:0000304"/>
    <property type="project" value="Reactome"/>
</dbReference>
<dbReference type="GO" id="GO:0005634">
    <property type="term" value="C:nucleus"/>
    <property type="evidence" value="ECO:0000266"/>
    <property type="project" value="MGI"/>
</dbReference>
<dbReference type="GO" id="GO:0003677">
    <property type="term" value="F:DNA binding"/>
    <property type="evidence" value="ECO:0007669"/>
    <property type="project" value="UniProtKB-KW"/>
</dbReference>
<dbReference type="GO" id="GO:0019904">
    <property type="term" value="F:protein domain specific binding"/>
    <property type="evidence" value="ECO:0007669"/>
    <property type="project" value="Ensembl"/>
</dbReference>
<dbReference type="GO" id="GO:0008270">
    <property type="term" value="F:zinc ion binding"/>
    <property type="evidence" value="ECO:0007669"/>
    <property type="project" value="UniProtKB-KW"/>
</dbReference>
<dbReference type="GO" id="GO:0048663">
    <property type="term" value="P:neuron fate commitment"/>
    <property type="evidence" value="ECO:0000315"/>
    <property type="project" value="MGI"/>
</dbReference>
<dbReference type="FunFam" id="3.30.160.60:FF:000483">
    <property type="entry name" value="Zinc finger protein 423"/>
    <property type="match status" value="1"/>
</dbReference>
<dbReference type="FunFam" id="3.30.160.60:FF:000244">
    <property type="entry name" value="zinc finger protein 423"/>
    <property type="match status" value="1"/>
</dbReference>
<dbReference type="FunFam" id="3.30.160.60:FF:000107">
    <property type="entry name" value="Zinc finger protein 521"/>
    <property type="match status" value="1"/>
</dbReference>
<dbReference type="FunFam" id="3.30.160.60:FF:000143">
    <property type="entry name" value="Zinc finger protein 521"/>
    <property type="match status" value="1"/>
</dbReference>
<dbReference type="FunFam" id="3.30.160.60:FF:000167">
    <property type="entry name" value="Zinc finger protein 521"/>
    <property type="match status" value="1"/>
</dbReference>
<dbReference type="FunFam" id="3.30.160.60:FF:000261">
    <property type="entry name" value="Zinc finger protein 521"/>
    <property type="match status" value="1"/>
</dbReference>
<dbReference type="FunFam" id="3.30.160.60:FF:000998">
    <property type="entry name" value="Zinc finger protein 521"/>
    <property type="match status" value="1"/>
</dbReference>
<dbReference type="FunFam" id="3.30.160.60:FF:002441">
    <property type="entry name" value="Zinc finger protein 521"/>
    <property type="match status" value="1"/>
</dbReference>
<dbReference type="FunFam" id="3.30.160.60:FF:002477">
    <property type="entry name" value="Zinc finger protein 521"/>
    <property type="match status" value="1"/>
</dbReference>
<dbReference type="FunFam" id="3.30.160.60:FF:000624">
    <property type="entry name" value="zinc finger protein 697"/>
    <property type="match status" value="1"/>
</dbReference>
<dbReference type="Gene3D" id="3.30.160.60">
    <property type="entry name" value="Classic Zinc Finger"/>
    <property type="match status" value="13"/>
</dbReference>
<dbReference type="InterPro" id="IPR036236">
    <property type="entry name" value="Znf_C2H2_sf"/>
</dbReference>
<dbReference type="InterPro" id="IPR013087">
    <property type="entry name" value="Znf_C2H2_type"/>
</dbReference>
<dbReference type="PANTHER" id="PTHR24379:SF121">
    <property type="entry name" value="C2H2-TYPE DOMAIN-CONTAINING PROTEIN"/>
    <property type="match status" value="1"/>
</dbReference>
<dbReference type="PANTHER" id="PTHR24379">
    <property type="entry name" value="KRAB AND ZINC FINGER DOMAIN-CONTAINING"/>
    <property type="match status" value="1"/>
</dbReference>
<dbReference type="Pfam" id="PF00096">
    <property type="entry name" value="zf-C2H2"/>
    <property type="match status" value="5"/>
</dbReference>
<dbReference type="Pfam" id="PF13912">
    <property type="entry name" value="zf-C2H2_6"/>
    <property type="match status" value="6"/>
</dbReference>
<dbReference type="Pfam" id="PF12874">
    <property type="entry name" value="zf-met"/>
    <property type="match status" value="1"/>
</dbReference>
<dbReference type="SMART" id="SM00355">
    <property type="entry name" value="ZnF_C2H2"/>
    <property type="match status" value="30"/>
</dbReference>
<dbReference type="SUPFAM" id="SSF57667">
    <property type="entry name" value="beta-beta-alpha zinc fingers"/>
    <property type="match status" value="10"/>
</dbReference>
<dbReference type="PROSITE" id="PS00028">
    <property type="entry name" value="ZINC_FINGER_C2H2_1"/>
    <property type="match status" value="27"/>
</dbReference>
<dbReference type="PROSITE" id="PS50157">
    <property type="entry name" value="ZINC_FINGER_C2H2_2"/>
    <property type="match status" value="24"/>
</dbReference>
<comment type="function">
    <text>Transcription factor that can both act as an activator or a repressor depending on the context. Involved in BMP signaling and in the regulation of the immature compartment of the hematopoietic system. Associates with SMADs in response to BMP2 leading to activate transcription of BMP target genes. Acts as a transcriptional repressor via its interaction with EBF1, a transcription factor involved specification of B-cell lineage; this interaction preventing EBF1 to bind DNA and activate target genes.</text>
</comment>
<comment type="subunit">
    <text evidence="1">Interacts with EBF1. Interacts with SMAD1 and SMAD4 (By similarity).</text>
</comment>
<comment type="subcellular location">
    <subcellularLocation>
        <location evidence="5">Nucleus</location>
    </subcellularLocation>
</comment>
<comment type="alternative products">
    <event type="alternative splicing"/>
    <isoform>
        <id>Q6KAS7-1</id>
        <name>1</name>
        <sequence type="displayed"/>
    </isoform>
    <isoform>
        <id>Q6KAS7-2</id>
        <name>2</name>
        <sequence type="described" ref="VSP_028553"/>
    </isoform>
</comment>
<comment type="tissue specificity">
    <text evidence="5">Widely expressed. Expressed in all B-cell stages.</text>
</comment>
<comment type="domain">
    <text evidence="1">Uses different DNA- and protein-binding zinc fingers to regulate the distinct BMP-Smad and hematopoietic system.</text>
</comment>
<comment type="disease">
    <text evidence="5 6">Defects in Znf521 are a cause of B-cell lymphomas. The Znf521 gene is a frequent target of retroviral integration in murine B-cell lymphomas. Involved in most B-cell tumors in the AKXD-27 strain. Viral insertion into the Znf521 gene in the AKXD-27 strain causes Znf521 overexpression in B-cell tumors, resulting in the up-regulation of EBF1 and the increased expression of a number of EBF1 target genes. This in contrast to the role of Znf521 in other cells as a transcriptional repressor of EBF1. Misexpression initiates tumorigenesis by perturbing B-cell development via an interaction with EBF1.</text>
</comment>
<comment type="similarity">
    <text evidence="8">Belongs to the krueppel C2H2-type zinc-finger protein family.</text>
</comment>
<comment type="sequence caution" evidence="8">
    <conflict type="erroneous initiation">
        <sequence resource="EMBL-CDS" id="BAC36964"/>
    </conflict>
</comment>
<comment type="sequence caution" evidence="8">
    <conflict type="erroneous initiation">
        <sequence resource="EMBL-CDS" id="BAD21380"/>
    </conflict>
</comment>